<keyword id="KW-0479">Metal-binding</keyword>
<keyword id="KW-0687">Ribonucleoprotein</keyword>
<keyword id="KW-0689">Ribosomal protein</keyword>
<keyword id="KW-0694">RNA-binding</keyword>
<keyword id="KW-0699">rRNA-binding</keyword>
<keyword id="KW-0862">Zinc</keyword>
<feature type="chain" id="PRO_1000126664" description="Large ribosomal subunit protein bL31">
    <location>
        <begin position="1"/>
        <end position="70"/>
    </location>
</feature>
<feature type="binding site" evidence="1">
    <location>
        <position position="16"/>
    </location>
    <ligand>
        <name>Zn(2+)</name>
        <dbReference type="ChEBI" id="CHEBI:29105"/>
    </ligand>
</feature>
<feature type="binding site" evidence="1">
    <location>
        <position position="18"/>
    </location>
    <ligand>
        <name>Zn(2+)</name>
        <dbReference type="ChEBI" id="CHEBI:29105"/>
    </ligand>
</feature>
<feature type="binding site" evidence="1">
    <location>
        <position position="38"/>
    </location>
    <ligand>
        <name>Zn(2+)</name>
        <dbReference type="ChEBI" id="CHEBI:29105"/>
    </ligand>
</feature>
<feature type="binding site" evidence="1">
    <location>
        <position position="41"/>
    </location>
    <ligand>
        <name>Zn(2+)</name>
        <dbReference type="ChEBI" id="CHEBI:29105"/>
    </ligand>
</feature>
<accession>A4T8L2</accession>
<sequence>MKSGIHPDYVETTVLCGCGASFTTRSTKKSGNITVEVCSQCHPFYTGKQKILDSGGRVARFEKRYGKRSK</sequence>
<proteinExistence type="inferred from homology"/>
<comment type="function">
    <text evidence="1">Binds the 23S rRNA.</text>
</comment>
<comment type="cofactor">
    <cofactor evidence="1">
        <name>Zn(2+)</name>
        <dbReference type="ChEBI" id="CHEBI:29105"/>
    </cofactor>
    <text evidence="1">Binds 1 zinc ion per subunit.</text>
</comment>
<comment type="subunit">
    <text evidence="1">Part of the 50S ribosomal subunit.</text>
</comment>
<comment type="similarity">
    <text evidence="1">Belongs to the bacterial ribosomal protein bL31 family. Type A subfamily.</text>
</comment>
<dbReference type="EMBL" id="CP000656">
    <property type="protein sequence ID" value="ABP44784.1"/>
    <property type="molecule type" value="Genomic_DNA"/>
</dbReference>
<dbReference type="SMR" id="A4T8L2"/>
<dbReference type="STRING" id="350054.Mflv_2306"/>
<dbReference type="KEGG" id="mgi:Mflv_2306"/>
<dbReference type="eggNOG" id="COG0254">
    <property type="taxonomic scope" value="Bacteria"/>
</dbReference>
<dbReference type="HOGENOM" id="CLU_114306_4_3_11"/>
<dbReference type="OrthoDB" id="9803251at2"/>
<dbReference type="GO" id="GO:1990904">
    <property type="term" value="C:ribonucleoprotein complex"/>
    <property type="evidence" value="ECO:0007669"/>
    <property type="project" value="UniProtKB-KW"/>
</dbReference>
<dbReference type="GO" id="GO:0005840">
    <property type="term" value="C:ribosome"/>
    <property type="evidence" value="ECO:0007669"/>
    <property type="project" value="UniProtKB-KW"/>
</dbReference>
<dbReference type="GO" id="GO:0046872">
    <property type="term" value="F:metal ion binding"/>
    <property type="evidence" value="ECO:0007669"/>
    <property type="project" value="UniProtKB-KW"/>
</dbReference>
<dbReference type="GO" id="GO:0019843">
    <property type="term" value="F:rRNA binding"/>
    <property type="evidence" value="ECO:0007669"/>
    <property type="project" value="UniProtKB-KW"/>
</dbReference>
<dbReference type="GO" id="GO:0003735">
    <property type="term" value="F:structural constituent of ribosome"/>
    <property type="evidence" value="ECO:0007669"/>
    <property type="project" value="InterPro"/>
</dbReference>
<dbReference type="GO" id="GO:0006412">
    <property type="term" value="P:translation"/>
    <property type="evidence" value="ECO:0007669"/>
    <property type="project" value="UniProtKB-UniRule"/>
</dbReference>
<dbReference type="Gene3D" id="4.10.830.30">
    <property type="entry name" value="Ribosomal protein L31"/>
    <property type="match status" value="1"/>
</dbReference>
<dbReference type="HAMAP" id="MF_00501">
    <property type="entry name" value="Ribosomal_bL31_1"/>
    <property type="match status" value="1"/>
</dbReference>
<dbReference type="InterPro" id="IPR034704">
    <property type="entry name" value="Ribosomal_bL28/bL31-like_sf"/>
</dbReference>
<dbReference type="InterPro" id="IPR002150">
    <property type="entry name" value="Ribosomal_bL31"/>
</dbReference>
<dbReference type="InterPro" id="IPR027491">
    <property type="entry name" value="Ribosomal_bL31_A"/>
</dbReference>
<dbReference type="InterPro" id="IPR042105">
    <property type="entry name" value="Ribosomal_bL31_sf"/>
</dbReference>
<dbReference type="NCBIfam" id="TIGR00105">
    <property type="entry name" value="L31"/>
    <property type="match status" value="1"/>
</dbReference>
<dbReference type="NCBIfam" id="NF000612">
    <property type="entry name" value="PRK00019.1"/>
    <property type="match status" value="1"/>
</dbReference>
<dbReference type="NCBIfam" id="NF001809">
    <property type="entry name" value="PRK00528.1"/>
    <property type="match status" value="1"/>
</dbReference>
<dbReference type="PANTHER" id="PTHR33280">
    <property type="entry name" value="50S RIBOSOMAL PROTEIN L31, CHLOROPLASTIC"/>
    <property type="match status" value="1"/>
</dbReference>
<dbReference type="PANTHER" id="PTHR33280:SF1">
    <property type="entry name" value="LARGE RIBOSOMAL SUBUNIT PROTEIN BL31C"/>
    <property type="match status" value="1"/>
</dbReference>
<dbReference type="Pfam" id="PF01197">
    <property type="entry name" value="Ribosomal_L31"/>
    <property type="match status" value="1"/>
</dbReference>
<dbReference type="PRINTS" id="PR01249">
    <property type="entry name" value="RIBOSOMALL31"/>
</dbReference>
<dbReference type="SUPFAM" id="SSF143800">
    <property type="entry name" value="L28p-like"/>
    <property type="match status" value="1"/>
</dbReference>
<dbReference type="PROSITE" id="PS01143">
    <property type="entry name" value="RIBOSOMAL_L31"/>
    <property type="match status" value="1"/>
</dbReference>
<organism>
    <name type="scientific">Mycolicibacterium gilvum (strain PYR-GCK)</name>
    <name type="common">Mycobacterium gilvum (strain PYR-GCK)</name>
    <dbReference type="NCBI Taxonomy" id="350054"/>
    <lineage>
        <taxon>Bacteria</taxon>
        <taxon>Bacillati</taxon>
        <taxon>Actinomycetota</taxon>
        <taxon>Actinomycetes</taxon>
        <taxon>Mycobacteriales</taxon>
        <taxon>Mycobacteriaceae</taxon>
        <taxon>Mycolicibacterium</taxon>
    </lineage>
</organism>
<protein>
    <recommendedName>
        <fullName evidence="1">Large ribosomal subunit protein bL31</fullName>
    </recommendedName>
    <alternativeName>
        <fullName evidence="2">50S ribosomal protein L31</fullName>
    </alternativeName>
</protein>
<evidence type="ECO:0000255" key="1">
    <source>
        <dbReference type="HAMAP-Rule" id="MF_00501"/>
    </source>
</evidence>
<evidence type="ECO:0000305" key="2"/>
<reference key="1">
    <citation type="submission" date="2007-04" db="EMBL/GenBank/DDBJ databases">
        <title>Complete sequence of chromosome of Mycobacterium gilvum PYR-GCK.</title>
        <authorList>
            <consortium name="US DOE Joint Genome Institute"/>
            <person name="Copeland A."/>
            <person name="Lucas S."/>
            <person name="Lapidus A."/>
            <person name="Barry K."/>
            <person name="Detter J.C."/>
            <person name="Glavina del Rio T."/>
            <person name="Hammon N."/>
            <person name="Israni S."/>
            <person name="Dalin E."/>
            <person name="Tice H."/>
            <person name="Pitluck S."/>
            <person name="Chain P."/>
            <person name="Malfatti S."/>
            <person name="Shin M."/>
            <person name="Vergez L."/>
            <person name="Schmutz J."/>
            <person name="Larimer F."/>
            <person name="Land M."/>
            <person name="Hauser L."/>
            <person name="Kyrpides N."/>
            <person name="Mikhailova N."/>
            <person name="Miller C."/>
            <person name="Richardson P."/>
        </authorList>
    </citation>
    <scope>NUCLEOTIDE SEQUENCE [LARGE SCALE GENOMIC DNA]</scope>
    <source>
        <strain>PYR-GCK</strain>
    </source>
</reference>
<gene>
    <name evidence="1" type="primary">rpmE</name>
    <name type="ordered locus">Mflv_2306</name>
</gene>
<name>RL31_MYCGI</name>